<gene>
    <name evidence="1" type="primary">rpsB</name>
    <name type="ordered locus">BAB1_1184</name>
</gene>
<protein>
    <recommendedName>
        <fullName evidence="1">Small ribosomal subunit protein uS2</fullName>
    </recommendedName>
    <alternativeName>
        <fullName evidence="2">30S ribosomal protein S2</fullName>
    </alternativeName>
</protein>
<reference key="1">
    <citation type="journal article" date="2005" name="Infect. Immun.">
        <title>Whole-genome analyses of speciation events in pathogenic Brucellae.</title>
        <authorList>
            <person name="Chain P.S."/>
            <person name="Comerci D.J."/>
            <person name="Tolmasky M.E."/>
            <person name="Larimer F.W."/>
            <person name="Malfatti S.A."/>
            <person name="Vergez L.M."/>
            <person name="Aguero F."/>
            <person name="Land M.L."/>
            <person name="Ugalde R.A."/>
            <person name="Garcia E."/>
        </authorList>
    </citation>
    <scope>NUCLEOTIDE SEQUENCE [LARGE SCALE GENOMIC DNA]</scope>
    <source>
        <strain>2308</strain>
    </source>
</reference>
<evidence type="ECO:0000255" key="1">
    <source>
        <dbReference type="HAMAP-Rule" id="MF_00291"/>
    </source>
</evidence>
<evidence type="ECO:0000305" key="2"/>
<accession>Q2YRJ1</accession>
<name>RS2_BRUA2</name>
<keyword id="KW-1185">Reference proteome</keyword>
<keyword id="KW-0687">Ribonucleoprotein</keyword>
<keyword id="KW-0689">Ribosomal protein</keyword>
<comment type="similarity">
    <text evidence="1">Belongs to the universal ribosomal protein uS2 family.</text>
</comment>
<proteinExistence type="inferred from homology"/>
<feature type="chain" id="PRO_1000003903" description="Small ribosomal subunit protein uS2">
    <location>
        <begin position="1"/>
        <end position="256"/>
    </location>
</feature>
<dbReference type="EMBL" id="AM040264">
    <property type="protein sequence ID" value="CAJ11140.1"/>
    <property type="molecule type" value="Genomic_DNA"/>
</dbReference>
<dbReference type="RefSeq" id="WP_002964289.1">
    <property type="nucleotide sequence ID" value="NZ_KN046823.1"/>
</dbReference>
<dbReference type="SMR" id="Q2YRJ1"/>
<dbReference type="STRING" id="359391.BAB1_1184"/>
<dbReference type="GeneID" id="97533588"/>
<dbReference type="KEGG" id="bmf:BAB1_1184"/>
<dbReference type="PATRIC" id="fig|359391.11.peg.82"/>
<dbReference type="HOGENOM" id="CLU_040318_2_1_5"/>
<dbReference type="PhylomeDB" id="Q2YRJ1"/>
<dbReference type="Proteomes" id="UP000002719">
    <property type="component" value="Chromosome I"/>
</dbReference>
<dbReference type="GO" id="GO:0022627">
    <property type="term" value="C:cytosolic small ribosomal subunit"/>
    <property type="evidence" value="ECO:0007669"/>
    <property type="project" value="TreeGrafter"/>
</dbReference>
<dbReference type="GO" id="GO:0003735">
    <property type="term" value="F:structural constituent of ribosome"/>
    <property type="evidence" value="ECO:0007669"/>
    <property type="project" value="InterPro"/>
</dbReference>
<dbReference type="GO" id="GO:0006412">
    <property type="term" value="P:translation"/>
    <property type="evidence" value="ECO:0007669"/>
    <property type="project" value="UniProtKB-UniRule"/>
</dbReference>
<dbReference type="CDD" id="cd01425">
    <property type="entry name" value="RPS2"/>
    <property type="match status" value="1"/>
</dbReference>
<dbReference type="FunFam" id="1.10.287.610:FF:000001">
    <property type="entry name" value="30S ribosomal protein S2"/>
    <property type="match status" value="1"/>
</dbReference>
<dbReference type="Gene3D" id="3.40.50.10490">
    <property type="entry name" value="Glucose-6-phosphate isomerase like protein, domain 1"/>
    <property type="match status" value="1"/>
</dbReference>
<dbReference type="Gene3D" id="1.10.287.610">
    <property type="entry name" value="Helix hairpin bin"/>
    <property type="match status" value="1"/>
</dbReference>
<dbReference type="HAMAP" id="MF_00291_B">
    <property type="entry name" value="Ribosomal_uS2_B"/>
    <property type="match status" value="1"/>
</dbReference>
<dbReference type="InterPro" id="IPR001865">
    <property type="entry name" value="Ribosomal_uS2"/>
</dbReference>
<dbReference type="InterPro" id="IPR005706">
    <property type="entry name" value="Ribosomal_uS2_bac/mit/plastid"/>
</dbReference>
<dbReference type="InterPro" id="IPR018130">
    <property type="entry name" value="Ribosomal_uS2_CS"/>
</dbReference>
<dbReference type="InterPro" id="IPR023591">
    <property type="entry name" value="Ribosomal_uS2_flav_dom_sf"/>
</dbReference>
<dbReference type="NCBIfam" id="TIGR01011">
    <property type="entry name" value="rpsB_bact"/>
    <property type="match status" value="1"/>
</dbReference>
<dbReference type="PANTHER" id="PTHR12534">
    <property type="entry name" value="30S RIBOSOMAL PROTEIN S2 PROKARYOTIC AND ORGANELLAR"/>
    <property type="match status" value="1"/>
</dbReference>
<dbReference type="PANTHER" id="PTHR12534:SF0">
    <property type="entry name" value="SMALL RIBOSOMAL SUBUNIT PROTEIN US2M"/>
    <property type="match status" value="1"/>
</dbReference>
<dbReference type="Pfam" id="PF00318">
    <property type="entry name" value="Ribosomal_S2"/>
    <property type="match status" value="1"/>
</dbReference>
<dbReference type="PRINTS" id="PR00395">
    <property type="entry name" value="RIBOSOMALS2"/>
</dbReference>
<dbReference type="SUPFAM" id="SSF52313">
    <property type="entry name" value="Ribosomal protein S2"/>
    <property type="match status" value="1"/>
</dbReference>
<dbReference type="PROSITE" id="PS00962">
    <property type="entry name" value="RIBOSOMAL_S2_1"/>
    <property type="match status" value="1"/>
</dbReference>
<dbReference type="PROSITE" id="PS00963">
    <property type="entry name" value="RIBOSOMAL_S2_2"/>
    <property type="match status" value="1"/>
</dbReference>
<sequence length="256" mass="27999">MALPDFSMRQLLEAGVHFGHQTHRWNPKMAPFIYGERNNIHILDLSQTVPLLNSALKVVSDTVARGGRVLFVGTKRQASDIIADAANRSAQYYVNARWLGGMMTNWKTISNSIQRLRKLDELLAGEAQGFTKKERLNLEREREKLDRALGGIKDMGSVPDLMFIIDTNKEAIAIQEAKRLGIPVVAVIDSNCDPDQIDYPIPGNDDAARAIALYCDLIARAALDGIARQQGAMGIDVGAQVEAPVEPALQAPAEGA</sequence>
<organism>
    <name type="scientific">Brucella abortus (strain 2308)</name>
    <dbReference type="NCBI Taxonomy" id="359391"/>
    <lineage>
        <taxon>Bacteria</taxon>
        <taxon>Pseudomonadati</taxon>
        <taxon>Pseudomonadota</taxon>
        <taxon>Alphaproteobacteria</taxon>
        <taxon>Hyphomicrobiales</taxon>
        <taxon>Brucellaceae</taxon>
        <taxon>Brucella/Ochrobactrum group</taxon>
        <taxon>Brucella</taxon>
    </lineage>
</organism>